<protein>
    <recommendedName>
        <fullName evidence="1">Protein ApaG</fullName>
    </recommendedName>
</protein>
<sequence length="126" mass="13853">MSALDDSIRVEVKTEYIEQQSSPEDQKYLFSYTITIINLGEQAAKLETRHWIITDANGKISEVQGAGVVGETPTIPPNTAYQYTSGTVLDTPLGIMYGTYGMVSESGEHFKATIKPFRLALPGLLH</sequence>
<accession>A0L065</accession>
<proteinExistence type="inferred from homology"/>
<dbReference type="EMBL" id="CP000469">
    <property type="protein sequence ID" value="ABK49434.1"/>
    <property type="molecule type" value="Genomic_DNA"/>
</dbReference>
<dbReference type="RefSeq" id="WP_011718031.1">
    <property type="nucleotide sequence ID" value="NC_008577.1"/>
</dbReference>
<dbReference type="SMR" id="A0L065"/>
<dbReference type="STRING" id="94122.Shewana3_3210"/>
<dbReference type="GeneID" id="94729138"/>
<dbReference type="KEGG" id="shn:Shewana3_3210"/>
<dbReference type="eggNOG" id="COG2967">
    <property type="taxonomic scope" value="Bacteria"/>
</dbReference>
<dbReference type="HOGENOM" id="CLU_128074_0_0_6"/>
<dbReference type="OrthoDB" id="9795226at2"/>
<dbReference type="Proteomes" id="UP000002589">
    <property type="component" value="Chromosome"/>
</dbReference>
<dbReference type="GO" id="GO:0070987">
    <property type="term" value="P:error-free translesion synthesis"/>
    <property type="evidence" value="ECO:0007669"/>
    <property type="project" value="TreeGrafter"/>
</dbReference>
<dbReference type="Gene3D" id="2.60.40.1470">
    <property type="entry name" value="ApaG domain"/>
    <property type="match status" value="1"/>
</dbReference>
<dbReference type="HAMAP" id="MF_00791">
    <property type="entry name" value="ApaG"/>
    <property type="match status" value="1"/>
</dbReference>
<dbReference type="InterPro" id="IPR007474">
    <property type="entry name" value="ApaG_domain"/>
</dbReference>
<dbReference type="InterPro" id="IPR036767">
    <property type="entry name" value="ApaG_sf"/>
</dbReference>
<dbReference type="InterPro" id="IPR023065">
    <property type="entry name" value="Uncharacterised_ApaG"/>
</dbReference>
<dbReference type="NCBIfam" id="NF003967">
    <property type="entry name" value="PRK05461.1"/>
    <property type="match status" value="1"/>
</dbReference>
<dbReference type="PANTHER" id="PTHR14289">
    <property type="entry name" value="F-BOX ONLY PROTEIN 3"/>
    <property type="match status" value="1"/>
</dbReference>
<dbReference type="PANTHER" id="PTHR14289:SF16">
    <property type="entry name" value="POLYMERASE DELTA-INTERACTING PROTEIN 2"/>
    <property type="match status" value="1"/>
</dbReference>
<dbReference type="Pfam" id="PF04379">
    <property type="entry name" value="DUF525"/>
    <property type="match status" value="1"/>
</dbReference>
<dbReference type="SUPFAM" id="SSF110069">
    <property type="entry name" value="ApaG-like"/>
    <property type="match status" value="1"/>
</dbReference>
<dbReference type="PROSITE" id="PS51087">
    <property type="entry name" value="APAG"/>
    <property type="match status" value="1"/>
</dbReference>
<feature type="chain" id="PRO_1000083654" description="Protein ApaG">
    <location>
        <begin position="1"/>
        <end position="126"/>
    </location>
</feature>
<feature type="domain" description="ApaG" evidence="1">
    <location>
        <begin position="2"/>
        <end position="126"/>
    </location>
</feature>
<reference key="1">
    <citation type="submission" date="2006-09" db="EMBL/GenBank/DDBJ databases">
        <title>Complete sequence of chromosome 1 of Shewanella sp. ANA-3.</title>
        <authorList>
            <person name="Copeland A."/>
            <person name="Lucas S."/>
            <person name="Lapidus A."/>
            <person name="Barry K."/>
            <person name="Detter J.C."/>
            <person name="Glavina del Rio T."/>
            <person name="Hammon N."/>
            <person name="Israni S."/>
            <person name="Dalin E."/>
            <person name="Tice H."/>
            <person name="Pitluck S."/>
            <person name="Chertkov O."/>
            <person name="Brettin T."/>
            <person name="Bruce D."/>
            <person name="Han C."/>
            <person name="Tapia R."/>
            <person name="Gilna P."/>
            <person name="Schmutz J."/>
            <person name="Larimer F."/>
            <person name="Land M."/>
            <person name="Hauser L."/>
            <person name="Kyrpides N."/>
            <person name="Kim E."/>
            <person name="Newman D."/>
            <person name="Salticov C."/>
            <person name="Konstantinidis K."/>
            <person name="Klappenback J."/>
            <person name="Tiedje J."/>
            <person name="Richardson P."/>
        </authorList>
    </citation>
    <scope>NUCLEOTIDE SEQUENCE [LARGE SCALE GENOMIC DNA]</scope>
    <source>
        <strain>ANA-3</strain>
    </source>
</reference>
<name>APAG_SHESA</name>
<gene>
    <name evidence="1" type="primary">apaG</name>
    <name type="ordered locus">Shewana3_3210</name>
</gene>
<organism>
    <name type="scientific">Shewanella sp. (strain ANA-3)</name>
    <dbReference type="NCBI Taxonomy" id="94122"/>
    <lineage>
        <taxon>Bacteria</taxon>
        <taxon>Pseudomonadati</taxon>
        <taxon>Pseudomonadota</taxon>
        <taxon>Gammaproteobacteria</taxon>
        <taxon>Alteromonadales</taxon>
        <taxon>Shewanellaceae</taxon>
        <taxon>Shewanella</taxon>
    </lineage>
</organism>
<evidence type="ECO:0000255" key="1">
    <source>
        <dbReference type="HAMAP-Rule" id="MF_00791"/>
    </source>
</evidence>